<gene>
    <name evidence="1" type="primary">pth</name>
    <name type="ordered locus">XF_2642</name>
</gene>
<sequence length="192" mass="21255">MLGLRLIVGLGNPGSEHTKTRHNAGFRFVDGLVQREGQRWMLESKLFAHVARVFIAGQWVWLLRPVTFMNLSGKSICAGLSFWKIKPEQMLVAHDELDFPPGAVRLKFDGGHGGQNGLRDITKLLGHGRFHRLRVGIGHPGHKDRVVNWVLGCPTCEENIAIDAALERASAVLPLVVAGDFDEAMKKLHTVV</sequence>
<organism>
    <name type="scientific">Xylella fastidiosa (strain 9a5c)</name>
    <dbReference type="NCBI Taxonomy" id="160492"/>
    <lineage>
        <taxon>Bacteria</taxon>
        <taxon>Pseudomonadati</taxon>
        <taxon>Pseudomonadota</taxon>
        <taxon>Gammaproteobacteria</taxon>
        <taxon>Lysobacterales</taxon>
        <taxon>Lysobacteraceae</taxon>
        <taxon>Xylella</taxon>
    </lineage>
</organism>
<feature type="chain" id="PRO_0000187861" description="Peptidyl-tRNA hydrolase">
    <location>
        <begin position="1"/>
        <end position="192"/>
    </location>
</feature>
<feature type="active site" description="Proton acceptor" evidence="1">
    <location>
        <position position="22"/>
    </location>
</feature>
<feature type="binding site" evidence="1">
    <location>
        <position position="17"/>
    </location>
    <ligand>
        <name>tRNA</name>
        <dbReference type="ChEBI" id="CHEBI:17843"/>
    </ligand>
</feature>
<feature type="binding site" evidence="1">
    <location>
        <position position="68"/>
    </location>
    <ligand>
        <name>tRNA</name>
        <dbReference type="ChEBI" id="CHEBI:17843"/>
    </ligand>
</feature>
<feature type="binding site" evidence="1">
    <location>
        <position position="70"/>
    </location>
    <ligand>
        <name>tRNA</name>
        <dbReference type="ChEBI" id="CHEBI:17843"/>
    </ligand>
</feature>
<feature type="binding site" evidence="1">
    <location>
        <position position="116"/>
    </location>
    <ligand>
        <name>tRNA</name>
        <dbReference type="ChEBI" id="CHEBI:17843"/>
    </ligand>
</feature>
<feature type="site" description="Discriminates between blocked and unblocked aminoacyl-tRNA" evidence="1">
    <location>
        <position position="12"/>
    </location>
</feature>
<feature type="site" description="Stabilizes the basic form of H active site to accept a proton" evidence="1">
    <location>
        <position position="95"/>
    </location>
</feature>
<accession>Q9PA78</accession>
<comment type="function">
    <text evidence="1">Hydrolyzes ribosome-free peptidyl-tRNAs (with 1 or more amino acids incorporated), which drop off the ribosome during protein synthesis, or as a result of ribosome stalling.</text>
</comment>
<comment type="function">
    <text evidence="1">Catalyzes the release of premature peptidyl moieties from peptidyl-tRNA molecules trapped in stalled 50S ribosomal subunits, and thus maintains levels of free tRNAs and 50S ribosomes.</text>
</comment>
<comment type="catalytic activity">
    <reaction evidence="1">
        <text>an N-acyl-L-alpha-aminoacyl-tRNA + H2O = an N-acyl-L-amino acid + a tRNA + H(+)</text>
        <dbReference type="Rhea" id="RHEA:54448"/>
        <dbReference type="Rhea" id="RHEA-COMP:10123"/>
        <dbReference type="Rhea" id="RHEA-COMP:13883"/>
        <dbReference type="ChEBI" id="CHEBI:15377"/>
        <dbReference type="ChEBI" id="CHEBI:15378"/>
        <dbReference type="ChEBI" id="CHEBI:59874"/>
        <dbReference type="ChEBI" id="CHEBI:78442"/>
        <dbReference type="ChEBI" id="CHEBI:138191"/>
        <dbReference type="EC" id="3.1.1.29"/>
    </reaction>
</comment>
<comment type="subunit">
    <text evidence="1">Monomer.</text>
</comment>
<comment type="subcellular location">
    <subcellularLocation>
        <location evidence="1">Cytoplasm</location>
    </subcellularLocation>
</comment>
<comment type="similarity">
    <text evidence="1">Belongs to the PTH family.</text>
</comment>
<name>PTH_XYLFA</name>
<proteinExistence type="inferred from homology"/>
<reference key="1">
    <citation type="journal article" date="2000" name="Nature">
        <title>The genome sequence of the plant pathogen Xylella fastidiosa.</title>
        <authorList>
            <person name="Simpson A.J.G."/>
            <person name="Reinach F.C."/>
            <person name="Arruda P."/>
            <person name="Abreu F.A."/>
            <person name="Acencio M."/>
            <person name="Alvarenga R."/>
            <person name="Alves L.M.C."/>
            <person name="Araya J.E."/>
            <person name="Baia G.S."/>
            <person name="Baptista C.S."/>
            <person name="Barros M.H."/>
            <person name="Bonaccorsi E.D."/>
            <person name="Bordin S."/>
            <person name="Bove J.M."/>
            <person name="Briones M.R.S."/>
            <person name="Bueno M.R.P."/>
            <person name="Camargo A.A."/>
            <person name="Camargo L.E.A."/>
            <person name="Carraro D.M."/>
            <person name="Carrer H."/>
            <person name="Colauto N.B."/>
            <person name="Colombo C."/>
            <person name="Costa F.F."/>
            <person name="Costa M.C.R."/>
            <person name="Costa-Neto C.M."/>
            <person name="Coutinho L.L."/>
            <person name="Cristofani M."/>
            <person name="Dias-Neto E."/>
            <person name="Docena C."/>
            <person name="El-Dorry H."/>
            <person name="Facincani A.P."/>
            <person name="Ferreira A.J.S."/>
            <person name="Ferreira V.C.A."/>
            <person name="Ferro J.A."/>
            <person name="Fraga J.S."/>
            <person name="Franca S.C."/>
            <person name="Franco M.C."/>
            <person name="Frohme M."/>
            <person name="Furlan L.R."/>
            <person name="Garnier M."/>
            <person name="Goldman G.H."/>
            <person name="Goldman M.H.S."/>
            <person name="Gomes S.L."/>
            <person name="Gruber A."/>
            <person name="Ho P.L."/>
            <person name="Hoheisel J.D."/>
            <person name="Junqueira M.L."/>
            <person name="Kemper E.L."/>
            <person name="Kitajima J.P."/>
            <person name="Krieger J.E."/>
            <person name="Kuramae E.E."/>
            <person name="Laigret F."/>
            <person name="Lambais M.R."/>
            <person name="Leite L.C.C."/>
            <person name="Lemos E.G.M."/>
            <person name="Lemos M.V.F."/>
            <person name="Lopes S.A."/>
            <person name="Lopes C.R."/>
            <person name="Machado J.A."/>
            <person name="Machado M.A."/>
            <person name="Madeira A.M.B.N."/>
            <person name="Madeira H.M.F."/>
            <person name="Marino C.L."/>
            <person name="Marques M.V."/>
            <person name="Martins E.A.L."/>
            <person name="Martins E.M.F."/>
            <person name="Matsukuma A.Y."/>
            <person name="Menck C.F.M."/>
            <person name="Miracca E.C."/>
            <person name="Miyaki C.Y."/>
            <person name="Monteiro-Vitorello C.B."/>
            <person name="Moon D.H."/>
            <person name="Nagai M.A."/>
            <person name="Nascimento A.L.T.O."/>
            <person name="Netto L.E.S."/>
            <person name="Nhani A. Jr."/>
            <person name="Nobrega F.G."/>
            <person name="Nunes L.R."/>
            <person name="Oliveira M.A."/>
            <person name="de Oliveira M.C."/>
            <person name="de Oliveira R.C."/>
            <person name="Palmieri D.A."/>
            <person name="Paris A."/>
            <person name="Peixoto B.R."/>
            <person name="Pereira G.A.G."/>
            <person name="Pereira H.A. Jr."/>
            <person name="Pesquero J.B."/>
            <person name="Quaggio R.B."/>
            <person name="Roberto P.G."/>
            <person name="Rodrigues V."/>
            <person name="de Rosa A.J.M."/>
            <person name="de Rosa V.E. Jr."/>
            <person name="de Sa R.G."/>
            <person name="Santelli R.V."/>
            <person name="Sawasaki H.E."/>
            <person name="da Silva A.C.R."/>
            <person name="da Silva A.M."/>
            <person name="da Silva F.R."/>
            <person name="Silva W.A. Jr."/>
            <person name="da Silveira J.F."/>
            <person name="Silvestri M.L.Z."/>
            <person name="Siqueira W.J."/>
            <person name="de Souza A.A."/>
            <person name="de Souza A.P."/>
            <person name="Terenzi M.F."/>
            <person name="Truffi D."/>
            <person name="Tsai S.M."/>
            <person name="Tsuhako M.H."/>
            <person name="Vallada H."/>
            <person name="Van Sluys M.A."/>
            <person name="Verjovski-Almeida S."/>
            <person name="Vettore A.L."/>
            <person name="Zago M.A."/>
            <person name="Zatz M."/>
            <person name="Meidanis J."/>
            <person name="Setubal J.C."/>
        </authorList>
    </citation>
    <scope>NUCLEOTIDE SEQUENCE [LARGE SCALE GENOMIC DNA]</scope>
    <source>
        <strain>9a5c</strain>
    </source>
</reference>
<evidence type="ECO:0000255" key="1">
    <source>
        <dbReference type="HAMAP-Rule" id="MF_00083"/>
    </source>
</evidence>
<keyword id="KW-0963">Cytoplasm</keyword>
<keyword id="KW-0378">Hydrolase</keyword>
<keyword id="KW-0694">RNA-binding</keyword>
<keyword id="KW-0820">tRNA-binding</keyword>
<protein>
    <recommendedName>
        <fullName evidence="1">Peptidyl-tRNA hydrolase</fullName>
        <shortName evidence="1">Pth</shortName>
        <ecNumber evidence="1">3.1.1.29</ecNumber>
    </recommendedName>
</protein>
<dbReference type="EC" id="3.1.1.29" evidence="1"/>
<dbReference type="EMBL" id="AE003849">
    <property type="protein sequence ID" value="AAF85439.1"/>
    <property type="molecule type" value="Genomic_DNA"/>
</dbReference>
<dbReference type="PIR" id="C82532">
    <property type="entry name" value="C82532"/>
</dbReference>
<dbReference type="RefSeq" id="WP_010895056.1">
    <property type="nucleotide sequence ID" value="NC_002488.3"/>
</dbReference>
<dbReference type="SMR" id="Q9PA78"/>
<dbReference type="STRING" id="160492.XF_2642"/>
<dbReference type="KEGG" id="xfa:XF_2642"/>
<dbReference type="eggNOG" id="COG0193">
    <property type="taxonomic scope" value="Bacteria"/>
</dbReference>
<dbReference type="HOGENOM" id="CLU_062456_3_1_6"/>
<dbReference type="Proteomes" id="UP000000812">
    <property type="component" value="Chromosome"/>
</dbReference>
<dbReference type="GO" id="GO:0005737">
    <property type="term" value="C:cytoplasm"/>
    <property type="evidence" value="ECO:0007669"/>
    <property type="project" value="UniProtKB-SubCell"/>
</dbReference>
<dbReference type="GO" id="GO:0004045">
    <property type="term" value="F:peptidyl-tRNA hydrolase activity"/>
    <property type="evidence" value="ECO:0007669"/>
    <property type="project" value="UniProtKB-UniRule"/>
</dbReference>
<dbReference type="GO" id="GO:0000049">
    <property type="term" value="F:tRNA binding"/>
    <property type="evidence" value="ECO:0007669"/>
    <property type="project" value="UniProtKB-UniRule"/>
</dbReference>
<dbReference type="GO" id="GO:0006515">
    <property type="term" value="P:protein quality control for misfolded or incompletely synthesized proteins"/>
    <property type="evidence" value="ECO:0007669"/>
    <property type="project" value="UniProtKB-UniRule"/>
</dbReference>
<dbReference type="GO" id="GO:0072344">
    <property type="term" value="P:rescue of stalled ribosome"/>
    <property type="evidence" value="ECO:0007669"/>
    <property type="project" value="UniProtKB-UniRule"/>
</dbReference>
<dbReference type="CDD" id="cd00462">
    <property type="entry name" value="PTH"/>
    <property type="match status" value="1"/>
</dbReference>
<dbReference type="FunFam" id="3.40.50.1470:FF:000001">
    <property type="entry name" value="Peptidyl-tRNA hydrolase"/>
    <property type="match status" value="1"/>
</dbReference>
<dbReference type="Gene3D" id="3.40.50.1470">
    <property type="entry name" value="Peptidyl-tRNA hydrolase"/>
    <property type="match status" value="1"/>
</dbReference>
<dbReference type="HAMAP" id="MF_00083">
    <property type="entry name" value="Pept_tRNA_hydro_bact"/>
    <property type="match status" value="1"/>
</dbReference>
<dbReference type="InterPro" id="IPR001328">
    <property type="entry name" value="Pept_tRNA_hydro"/>
</dbReference>
<dbReference type="InterPro" id="IPR018171">
    <property type="entry name" value="Pept_tRNA_hydro_CS"/>
</dbReference>
<dbReference type="InterPro" id="IPR036416">
    <property type="entry name" value="Pept_tRNA_hydro_sf"/>
</dbReference>
<dbReference type="NCBIfam" id="TIGR00447">
    <property type="entry name" value="pth"/>
    <property type="match status" value="1"/>
</dbReference>
<dbReference type="PANTHER" id="PTHR17224">
    <property type="entry name" value="PEPTIDYL-TRNA HYDROLASE"/>
    <property type="match status" value="1"/>
</dbReference>
<dbReference type="PANTHER" id="PTHR17224:SF1">
    <property type="entry name" value="PEPTIDYL-TRNA HYDROLASE"/>
    <property type="match status" value="1"/>
</dbReference>
<dbReference type="Pfam" id="PF01195">
    <property type="entry name" value="Pept_tRNA_hydro"/>
    <property type="match status" value="1"/>
</dbReference>
<dbReference type="SUPFAM" id="SSF53178">
    <property type="entry name" value="Peptidyl-tRNA hydrolase-like"/>
    <property type="match status" value="1"/>
</dbReference>
<dbReference type="PROSITE" id="PS01195">
    <property type="entry name" value="PEPT_TRNA_HYDROL_1"/>
    <property type="match status" value="1"/>
</dbReference>